<dbReference type="EC" id="2.1.1.74" evidence="1"/>
<dbReference type="EMBL" id="CP000033">
    <property type="protein sequence ID" value="AAV42833.1"/>
    <property type="molecule type" value="Genomic_DNA"/>
</dbReference>
<dbReference type="RefSeq" id="WP_003547141.1">
    <property type="nucleotide sequence ID" value="NC_006814.3"/>
</dbReference>
<dbReference type="RefSeq" id="YP_193864.1">
    <property type="nucleotide sequence ID" value="NC_006814.3"/>
</dbReference>
<dbReference type="SMR" id="Q5FKE1"/>
<dbReference type="STRING" id="272621.LBA0982"/>
<dbReference type="KEGG" id="lac:LBA0982"/>
<dbReference type="PATRIC" id="fig|272621.13.peg.933"/>
<dbReference type="eggNOG" id="COG1206">
    <property type="taxonomic scope" value="Bacteria"/>
</dbReference>
<dbReference type="HOGENOM" id="CLU_033057_1_0_9"/>
<dbReference type="OrthoDB" id="9803114at2"/>
<dbReference type="BioCyc" id="LACI272621:G1G49-983-MONOMER"/>
<dbReference type="Proteomes" id="UP000006381">
    <property type="component" value="Chromosome"/>
</dbReference>
<dbReference type="GO" id="GO:0005829">
    <property type="term" value="C:cytosol"/>
    <property type="evidence" value="ECO:0007669"/>
    <property type="project" value="TreeGrafter"/>
</dbReference>
<dbReference type="GO" id="GO:0050660">
    <property type="term" value="F:flavin adenine dinucleotide binding"/>
    <property type="evidence" value="ECO:0007669"/>
    <property type="project" value="UniProtKB-UniRule"/>
</dbReference>
<dbReference type="GO" id="GO:0047151">
    <property type="term" value="F:tRNA (uracil(54)-C5)-methyltransferase activity, 5,10-methylenetetrahydrofolate-dependent"/>
    <property type="evidence" value="ECO:0007669"/>
    <property type="project" value="UniProtKB-UniRule"/>
</dbReference>
<dbReference type="GO" id="GO:0030488">
    <property type="term" value="P:tRNA methylation"/>
    <property type="evidence" value="ECO:0007669"/>
    <property type="project" value="TreeGrafter"/>
</dbReference>
<dbReference type="GO" id="GO:0002098">
    <property type="term" value="P:tRNA wobble uridine modification"/>
    <property type="evidence" value="ECO:0007669"/>
    <property type="project" value="TreeGrafter"/>
</dbReference>
<dbReference type="FunFam" id="3.50.50.60:FF:000035">
    <property type="entry name" value="Methylenetetrahydrofolate--tRNA-(uracil-5-)-methyltransferase TrmFO"/>
    <property type="match status" value="1"/>
</dbReference>
<dbReference type="FunFam" id="3.50.50.60:FF:000040">
    <property type="entry name" value="Methylenetetrahydrofolate--tRNA-(uracil-5-)-methyltransferase TrmFO"/>
    <property type="match status" value="1"/>
</dbReference>
<dbReference type="Gene3D" id="3.50.50.60">
    <property type="entry name" value="FAD/NAD(P)-binding domain"/>
    <property type="match status" value="2"/>
</dbReference>
<dbReference type="HAMAP" id="MF_01037">
    <property type="entry name" value="TrmFO"/>
    <property type="match status" value="1"/>
</dbReference>
<dbReference type="InterPro" id="IPR036188">
    <property type="entry name" value="FAD/NAD-bd_sf"/>
</dbReference>
<dbReference type="InterPro" id="IPR002218">
    <property type="entry name" value="MnmG-rel"/>
</dbReference>
<dbReference type="InterPro" id="IPR020595">
    <property type="entry name" value="MnmG-rel_CS"/>
</dbReference>
<dbReference type="InterPro" id="IPR040131">
    <property type="entry name" value="MnmG_N"/>
</dbReference>
<dbReference type="InterPro" id="IPR004417">
    <property type="entry name" value="TrmFO"/>
</dbReference>
<dbReference type="NCBIfam" id="TIGR00137">
    <property type="entry name" value="gid_trmFO"/>
    <property type="match status" value="1"/>
</dbReference>
<dbReference type="NCBIfam" id="NF003739">
    <property type="entry name" value="PRK05335.1"/>
    <property type="match status" value="1"/>
</dbReference>
<dbReference type="PANTHER" id="PTHR11806">
    <property type="entry name" value="GLUCOSE INHIBITED DIVISION PROTEIN A"/>
    <property type="match status" value="1"/>
</dbReference>
<dbReference type="PANTHER" id="PTHR11806:SF2">
    <property type="entry name" value="METHYLENETETRAHYDROFOLATE--TRNA-(URACIL-5-)-METHYLTRANSFERASE TRMFO"/>
    <property type="match status" value="1"/>
</dbReference>
<dbReference type="Pfam" id="PF01134">
    <property type="entry name" value="GIDA"/>
    <property type="match status" value="1"/>
</dbReference>
<dbReference type="SUPFAM" id="SSF51905">
    <property type="entry name" value="FAD/NAD(P)-binding domain"/>
    <property type="match status" value="1"/>
</dbReference>
<dbReference type="PROSITE" id="PS01281">
    <property type="entry name" value="GIDA_2"/>
    <property type="match status" value="1"/>
</dbReference>
<protein>
    <recommendedName>
        <fullName evidence="1">Methylenetetrahydrofolate--tRNA-(uracil-5-)-methyltransferase TrmFO</fullName>
        <ecNumber evidence="1">2.1.1.74</ecNumber>
    </recommendedName>
    <alternativeName>
        <fullName evidence="1">Folate-dependent tRNA (uracil-5-)-methyltransferase</fullName>
    </alternativeName>
    <alternativeName>
        <fullName evidence="1">Folate-dependent tRNA(M-5-U54)-methyltransferase</fullName>
    </alternativeName>
</protein>
<name>TRMFO_LACAC</name>
<organism>
    <name type="scientific">Lactobacillus acidophilus (strain ATCC 700396 / NCK56 / N2 / NCFM)</name>
    <dbReference type="NCBI Taxonomy" id="272621"/>
    <lineage>
        <taxon>Bacteria</taxon>
        <taxon>Bacillati</taxon>
        <taxon>Bacillota</taxon>
        <taxon>Bacilli</taxon>
        <taxon>Lactobacillales</taxon>
        <taxon>Lactobacillaceae</taxon>
        <taxon>Lactobacillus</taxon>
    </lineage>
</organism>
<accession>Q5FKE1</accession>
<keyword id="KW-0963">Cytoplasm</keyword>
<keyword id="KW-0274">FAD</keyword>
<keyword id="KW-0285">Flavoprotein</keyword>
<keyword id="KW-0489">Methyltransferase</keyword>
<keyword id="KW-0520">NAD</keyword>
<keyword id="KW-0521">NADP</keyword>
<keyword id="KW-1185">Reference proteome</keyword>
<keyword id="KW-0808">Transferase</keyword>
<keyword id="KW-0819">tRNA processing</keyword>
<comment type="function">
    <text evidence="1">Catalyzes the folate-dependent formation of 5-methyl-uridine at position 54 (M-5-U54) in all tRNAs.</text>
</comment>
<comment type="catalytic activity">
    <reaction evidence="1">
        <text>uridine(54) in tRNA + (6R)-5,10-methylene-5,6,7,8-tetrahydrofolate + NADH + H(+) = 5-methyluridine(54) in tRNA + (6S)-5,6,7,8-tetrahydrofolate + NAD(+)</text>
        <dbReference type="Rhea" id="RHEA:16873"/>
        <dbReference type="Rhea" id="RHEA-COMP:10167"/>
        <dbReference type="Rhea" id="RHEA-COMP:10193"/>
        <dbReference type="ChEBI" id="CHEBI:15378"/>
        <dbReference type="ChEBI" id="CHEBI:15636"/>
        <dbReference type="ChEBI" id="CHEBI:57453"/>
        <dbReference type="ChEBI" id="CHEBI:57540"/>
        <dbReference type="ChEBI" id="CHEBI:57945"/>
        <dbReference type="ChEBI" id="CHEBI:65315"/>
        <dbReference type="ChEBI" id="CHEBI:74447"/>
        <dbReference type="EC" id="2.1.1.74"/>
    </reaction>
</comment>
<comment type="catalytic activity">
    <reaction evidence="1">
        <text>uridine(54) in tRNA + (6R)-5,10-methylene-5,6,7,8-tetrahydrofolate + NADPH + H(+) = 5-methyluridine(54) in tRNA + (6S)-5,6,7,8-tetrahydrofolate + NADP(+)</text>
        <dbReference type="Rhea" id="RHEA:62372"/>
        <dbReference type="Rhea" id="RHEA-COMP:10167"/>
        <dbReference type="Rhea" id="RHEA-COMP:10193"/>
        <dbReference type="ChEBI" id="CHEBI:15378"/>
        <dbReference type="ChEBI" id="CHEBI:15636"/>
        <dbReference type="ChEBI" id="CHEBI:57453"/>
        <dbReference type="ChEBI" id="CHEBI:57783"/>
        <dbReference type="ChEBI" id="CHEBI:58349"/>
        <dbReference type="ChEBI" id="CHEBI:65315"/>
        <dbReference type="ChEBI" id="CHEBI:74447"/>
        <dbReference type="EC" id="2.1.1.74"/>
    </reaction>
</comment>
<comment type="cofactor">
    <cofactor evidence="1">
        <name>FAD</name>
        <dbReference type="ChEBI" id="CHEBI:57692"/>
    </cofactor>
</comment>
<comment type="subcellular location">
    <subcellularLocation>
        <location evidence="1">Cytoplasm</location>
    </subcellularLocation>
</comment>
<comment type="similarity">
    <text evidence="1">Belongs to the MnmG family. TrmFO subfamily.</text>
</comment>
<proteinExistence type="inferred from homology"/>
<sequence>MPENVTVIGAGLAGSEATWQLAKRGIHVDLYEMRPKKETPAHETGEFAELVCTNSMRSNQLSNAVGLLKEEMRHLDSLIMKAADMTQVPAGGALAVDRDSFSKYVTDTLKGMDNVTVHEEEIVKIPEDGITIIATGPLTSDALAKQIQAFSGTDSLHFFDAAAPIIAADSIDMDIVYKKSRYDRGEAAYLNCPMSKEQYEKFANELIKAETAQLHGFENSDVFEGCMPIEVMAARGAKTMLFGPLKPVGLEDPHTGETPYAVVQLRQDNAAASMYNIVGFQTHLKFGEQKRVFSMIPGLENARFVRYGKMHRNTYMASPNVLTASYEAKNRPGLFFAGQMTGVEGYVESAGSGLVAGINAAREALGKETVAFPKNTALGSMANYVTTTSAKHFQPMNASFALLPALEGKKIRKKRERHEKISERGLASLDAFKTEVLD</sequence>
<gene>
    <name evidence="1" type="primary">trmFO</name>
    <name type="synonym">gid</name>
    <name type="ordered locus">LBA0982</name>
</gene>
<feature type="chain" id="PRO_0000117246" description="Methylenetetrahydrofolate--tRNA-(uracil-5-)-methyltransferase TrmFO">
    <location>
        <begin position="1"/>
        <end position="438"/>
    </location>
</feature>
<feature type="binding site" evidence="1">
    <location>
        <begin position="9"/>
        <end position="14"/>
    </location>
    <ligand>
        <name>FAD</name>
        <dbReference type="ChEBI" id="CHEBI:57692"/>
    </ligand>
</feature>
<evidence type="ECO:0000255" key="1">
    <source>
        <dbReference type="HAMAP-Rule" id="MF_01037"/>
    </source>
</evidence>
<reference key="1">
    <citation type="journal article" date="2005" name="Proc. Natl. Acad. Sci. U.S.A.">
        <title>Complete genome sequence of the probiotic lactic acid bacterium Lactobacillus acidophilus NCFM.</title>
        <authorList>
            <person name="Altermann E."/>
            <person name="Russell W.M."/>
            <person name="Azcarate-Peril M.A."/>
            <person name="Barrangou R."/>
            <person name="Buck B.L."/>
            <person name="McAuliffe O."/>
            <person name="Souther N."/>
            <person name="Dobson A."/>
            <person name="Duong T."/>
            <person name="Callanan M."/>
            <person name="Lick S."/>
            <person name="Hamrick A."/>
            <person name="Cano R."/>
            <person name="Klaenhammer T.R."/>
        </authorList>
    </citation>
    <scope>NUCLEOTIDE SEQUENCE [LARGE SCALE GENOMIC DNA]</scope>
    <source>
        <strain>ATCC 700396 / NCK56 / N2 / NCFM</strain>
    </source>
</reference>